<feature type="chain" id="PRO_0000172651" description="Phosphatidylglycerol--prolipoprotein diacylglyceryl transferase">
    <location>
        <begin position="1"/>
        <end position="303"/>
    </location>
</feature>
<feature type="transmembrane region" description="Helical" evidence="1">
    <location>
        <begin position="18"/>
        <end position="38"/>
    </location>
</feature>
<feature type="transmembrane region" description="Helical" evidence="1">
    <location>
        <begin position="50"/>
        <end position="70"/>
    </location>
</feature>
<feature type="transmembrane region" description="Helical" evidence="1">
    <location>
        <begin position="106"/>
        <end position="126"/>
    </location>
</feature>
<feature type="transmembrane region" description="Helical" evidence="1">
    <location>
        <begin position="193"/>
        <end position="213"/>
    </location>
</feature>
<feature type="transmembrane region" description="Helical" evidence="1">
    <location>
        <begin position="223"/>
        <end position="243"/>
    </location>
</feature>
<feature type="transmembrane region" description="Helical" evidence="1">
    <location>
        <begin position="266"/>
        <end position="286"/>
    </location>
</feature>
<feature type="binding site" evidence="1">
    <location>
        <position position="154"/>
    </location>
    <ligand>
        <name>a 1,2-diacyl-sn-glycero-3-phospho-(1'-sn-glycerol)</name>
        <dbReference type="ChEBI" id="CHEBI:64716"/>
    </ligand>
</feature>
<evidence type="ECO:0000255" key="1">
    <source>
        <dbReference type="HAMAP-Rule" id="MF_01147"/>
    </source>
</evidence>
<sequence>MEGIIATFRSPGAELIELGTLTVRWYGILIAISVLIGLKLSTRLGSYRNINPGIINDLMPILILSSIFGARFYYVSFEWNNYNGVNFWSKVHLLGLQIPIPSFLEIWNGGIAIHGALIMGTISIILFCRIKKQRFWDVLDVLVPSVALGQAIGRWGNFFNNEAFGLPTNQPWKLFIPFSSRPESFSDQSYFHPTFLYESLWNICIFLILIFLFRLNIRGLMKLPSGALSCIYLITYSLGRIWIEGLRIDPLCLGGSPPFCEGGLRIAQLISFLLICLGSFGLWWIYQSKRKMPNFGITRNRKK</sequence>
<dbReference type="EC" id="2.5.1.145" evidence="1"/>
<dbReference type="EMBL" id="AE017126">
    <property type="protein sequence ID" value="AAP99504.1"/>
    <property type="molecule type" value="Genomic_DNA"/>
</dbReference>
<dbReference type="RefSeq" id="NP_874852.1">
    <property type="nucleotide sequence ID" value="NC_005042.1"/>
</dbReference>
<dbReference type="RefSeq" id="WP_011124613.1">
    <property type="nucleotide sequence ID" value="NC_005042.1"/>
</dbReference>
<dbReference type="SMR" id="Q7VDC2"/>
<dbReference type="STRING" id="167539.Pro_0458"/>
<dbReference type="EnsemblBacteria" id="AAP99504">
    <property type="protein sequence ID" value="AAP99504"/>
    <property type="gene ID" value="Pro_0458"/>
</dbReference>
<dbReference type="KEGG" id="pma:Pro_0458"/>
<dbReference type="PATRIC" id="fig|167539.5.peg.469"/>
<dbReference type="eggNOG" id="COG0682">
    <property type="taxonomic scope" value="Bacteria"/>
</dbReference>
<dbReference type="HOGENOM" id="CLU_013386_1_2_3"/>
<dbReference type="OrthoDB" id="871140at2"/>
<dbReference type="UniPathway" id="UPA00664"/>
<dbReference type="Proteomes" id="UP000001420">
    <property type="component" value="Chromosome"/>
</dbReference>
<dbReference type="GO" id="GO:0005886">
    <property type="term" value="C:plasma membrane"/>
    <property type="evidence" value="ECO:0007669"/>
    <property type="project" value="UniProtKB-SubCell"/>
</dbReference>
<dbReference type="GO" id="GO:0008961">
    <property type="term" value="F:phosphatidylglycerol-prolipoprotein diacylglyceryl transferase activity"/>
    <property type="evidence" value="ECO:0007669"/>
    <property type="project" value="UniProtKB-UniRule"/>
</dbReference>
<dbReference type="GO" id="GO:0042158">
    <property type="term" value="P:lipoprotein biosynthetic process"/>
    <property type="evidence" value="ECO:0007669"/>
    <property type="project" value="UniProtKB-UniRule"/>
</dbReference>
<dbReference type="HAMAP" id="MF_01147">
    <property type="entry name" value="Lgt"/>
    <property type="match status" value="1"/>
</dbReference>
<dbReference type="InterPro" id="IPR001640">
    <property type="entry name" value="Lgt"/>
</dbReference>
<dbReference type="NCBIfam" id="TIGR00544">
    <property type="entry name" value="lgt"/>
    <property type="match status" value="1"/>
</dbReference>
<dbReference type="PANTHER" id="PTHR30589:SF0">
    <property type="entry name" value="PHOSPHATIDYLGLYCEROL--PROLIPOPROTEIN DIACYLGLYCERYL TRANSFERASE"/>
    <property type="match status" value="1"/>
</dbReference>
<dbReference type="PANTHER" id="PTHR30589">
    <property type="entry name" value="PROLIPOPROTEIN DIACYLGLYCERYL TRANSFERASE"/>
    <property type="match status" value="1"/>
</dbReference>
<dbReference type="Pfam" id="PF01790">
    <property type="entry name" value="LGT"/>
    <property type="match status" value="1"/>
</dbReference>
<dbReference type="PROSITE" id="PS01311">
    <property type="entry name" value="LGT"/>
    <property type="match status" value="1"/>
</dbReference>
<protein>
    <recommendedName>
        <fullName evidence="1">Phosphatidylglycerol--prolipoprotein diacylglyceryl transferase</fullName>
        <ecNumber evidence="1">2.5.1.145</ecNumber>
    </recommendedName>
</protein>
<accession>Q7VDC2</accession>
<keyword id="KW-0997">Cell inner membrane</keyword>
<keyword id="KW-1003">Cell membrane</keyword>
<keyword id="KW-0472">Membrane</keyword>
<keyword id="KW-1185">Reference proteome</keyword>
<keyword id="KW-0808">Transferase</keyword>
<keyword id="KW-0812">Transmembrane</keyword>
<keyword id="KW-1133">Transmembrane helix</keyword>
<gene>
    <name evidence="1" type="primary">lgt</name>
    <name type="ordered locus">Pro_0458</name>
</gene>
<proteinExistence type="inferred from homology"/>
<organism>
    <name type="scientific">Prochlorococcus marinus (strain SARG / CCMP1375 / SS120)</name>
    <dbReference type="NCBI Taxonomy" id="167539"/>
    <lineage>
        <taxon>Bacteria</taxon>
        <taxon>Bacillati</taxon>
        <taxon>Cyanobacteriota</taxon>
        <taxon>Cyanophyceae</taxon>
        <taxon>Synechococcales</taxon>
        <taxon>Prochlorococcaceae</taxon>
        <taxon>Prochlorococcus</taxon>
    </lineage>
</organism>
<name>LGT_PROMA</name>
<comment type="function">
    <text evidence="1">Catalyzes the transfer of the diacylglyceryl group from phosphatidylglycerol to the sulfhydryl group of the N-terminal cysteine of a prolipoprotein, the first step in the formation of mature lipoproteins.</text>
</comment>
<comment type="catalytic activity">
    <reaction evidence="1">
        <text>L-cysteinyl-[prolipoprotein] + a 1,2-diacyl-sn-glycero-3-phospho-(1'-sn-glycerol) = an S-1,2-diacyl-sn-glyceryl-L-cysteinyl-[prolipoprotein] + sn-glycerol 1-phosphate + H(+)</text>
        <dbReference type="Rhea" id="RHEA:56712"/>
        <dbReference type="Rhea" id="RHEA-COMP:14679"/>
        <dbReference type="Rhea" id="RHEA-COMP:14680"/>
        <dbReference type="ChEBI" id="CHEBI:15378"/>
        <dbReference type="ChEBI" id="CHEBI:29950"/>
        <dbReference type="ChEBI" id="CHEBI:57685"/>
        <dbReference type="ChEBI" id="CHEBI:64716"/>
        <dbReference type="ChEBI" id="CHEBI:140658"/>
        <dbReference type="EC" id="2.5.1.145"/>
    </reaction>
</comment>
<comment type="pathway">
    <text evidence="1">Protein modification; lipoprotein biosynthesis (diacylglyceryl transfer).</text>
</comment>
<comment type="subcellular location">
    <subcellularLocation>
        <location evidence="1">Cell inner membrane</location>
        <topology evidence="1">Multi-pass membrane protein</topology>
    </subcellularLocation>
</comment>
<comment type="similarity">
    <text evidence="1">Belongs to the Lgt family.</text>
</comment>
<reference key="1">
    <citation type="journal article" date="2003" name="Proc. Natl. Acad. Sci. U.S.A.">
        <title>Genome sequence of the cyanobacterium Prochlorococcus marinus SS120, a nearly minimal oxyphototrophic genome.</title>
        <authorList>
            <person name="Dufresne A."/>
            <person name="Salanoubat M."/>
            <person name="Partensky F."/>
            <person name="Artiguenave F."/>
            <person name="Axmann I.M."/>
            <person name="Barbe V."/>
            <person name="Duprat S."/>
            <person name="Galperin M.Y."/>
            <person name="Koonin E.V."/>
            <person name="Le Gall F."/>
            <person name="Makarova K.S."/>
            <person name="Ostrowski M."/>
            <person name="Oztas S."/>
            <person name="Robert C."/>
            <person name="Rogozin I.B."/>
            <person name="Scanlan D.J."/>
            <person name="Tandeau de Marsac N."/>
            <person name="Weissenbach J."/>
            <person name="Wincker P."/>
            <person name="Wolf Y.I."/>
            <person name="Hess W.R."/>
        </authorList>
    </citation>
    <scope>NUCLEOTIDE SEQUENCE [LARGE SCALE GENOMIC DNA]</scope>
    <source>
        <strain>SARG / CCMP1375 / SS120</strain>
    </source>
</reference>